<gene>
    <name evidence="1" type="primary">rpmB</name>
    <name type="ordered locus">Mmc1_0815</name>
</gene>
<protein>
    <recommendedName>
        <fullName evidence="1">Large ribosomal subunit protein bL28</fullName>
    </recommendedName>
    <alternativeName>
        <fullName evidence="3">50S ribosomal protein L28</fullName>
    </alternativeName>
</protein>
<keyword id="KW-1185">Reference proteome</keyword>
<keyword id="KW-0687">Ribonucleoprotein</keyword>
<keyword id="KW-0689">Ribosomal protein</keyword>
<sequence length="95" mass="10554">MARKRTLGGKAPQAGNKVSHSQRKTRRQWMPNIQTKALWSITLGQSVKVTISTSALRSVDNAGGLDNYLLKILPSELTPSMRRVARQIRERKAAA</sequence>
<dbReference type="EMBL" id="CP000471">
    <property type="protein sequence ID" value="ABK43334.1"/>
    <property type="molecule type" value="Genomic_DNA"/>
</dbReference>
<dbReference type="RefSeq" id="WP_011712494.1">
    <property type="nucleotide sequence ID" value="NC_008576.1"/>
</dbReference>
<dbReference type="SMR" id="A0L5U1"/>
<dbReference type="STRING" id="156889.Mmc1_0815"/>
<dbReference type="KEGG" id="mgm:Mmc1_0815"/>
<dbReference type="eggNOG" id="COG0227">
    <property type="taxonomic scope" value="Bacteria"/>
</dbReference>
<dbReference type="HOGENOM" id="CLU_064548_4_2_5"/>
<dbReference type="OrthoDB" id="9805609at2"/>
<dbReference type="Proteomes" id="UP000002586">
    <property type="component" value="Chromosome"/>
</dbReference>
<dbReference type="GO" id="GO:1990904">
    <property type="term" value="C:ribonucleoprotein complex"/>
    <property type="evidence" value="ECO:0007669"/>
    <property type="project" value="UniProtKB-KW"/>
</dbReference>
<dbReference type="GO" id="GO:0005840">
    <property type="term" value="C:ribosome"/>
    <property type="evidence" value="ECO:0007669"/>
    <property type="project" value="UniProtKB-KW"/>
</dbReference>
<dbReference type="GO" id="GO:0003735">
    <property type="term" value="F:structural constituent of ribosome"/>
    <property type="evidence" value="ECO:0007669"/>
    <property type="project" value="InterPro"/>
</dbReference>
<dbReference type="GO" id="GO:0006412">
    <property type="term" value="P:translation"/>
    <property type="evidence" value="ECO:0007669"/>
    <property type="project" value="UniProtKB-UniRule"/>
</dbReference>
<dbReference type="FunFam" id="2.30.170.40:FF:000003">
    <property type="entry name" value="54S ribosomal protein L24"/>
    <property type="match status" value="1"/>
</dbReference>
<dbReference type="Gene3D" id="2.30.170.40">
    <property type="entry name" value="Ribosomal protein L28/L24"/>
    <property type="match status" value="1"/>
</dbReference>
<dbReference type="HAMAP" id="MF_00373">
    <property type="entry name" value="Ribosomal_bL28"/>
    <property type="match status" value="1"/>
</dbReference>
<dbReference type="InterPro" id="IPR026569">
    <property type="entry name" value="Ribosomal_bL28"/>
</dbReference>
<dbReference type="InterPro" id="IPR034704">
    <property type="entry name" value="Ribosomal_bL28/bL31-like_sf"/>
</dbReference>
<dbReference type="InterPro" id="IPR001383">
    <property type="entry name" value="Ribosomal_bL28_bact-type"/>
</dbReference>
<dbReference type="InterPro" id="IPR037147">
    <property type="entry name" value="Ribosomal_bL28_sf"/>
</dbReference>
<dbReference type="NCBIfam" id="TIGR00009">
    <property type="entry name" value="L28"/>
    <property type="match status" value="1"/>
</dbReference>
<dbReference type="PANTHER" id="PTHR13528">
    <property type="entry name" value="39S RIBOSOMAL PROTEIN L28, MITOCHONDRIAL"/>
    <property type="match status" value="1"/>
</dbReference>
<dbReference type="PANTHER" id="PTHR13528:SF2">
    <property type="entry name" value="LARGE RIBOSOMAL SUBUNIT PROTEIN BL28M"/>
    <property type="match status" value="1"/>
</dbReference>
<dbReference type="Pfam" id="PF00830">
    <property type="entry name" value="Ribosomal_L28"/>
    <property type="match status" value="1"/>
</dbReference>
<dbReference type="SUPFAM" id="SSF143800">
    <property type="entry name" value="L28p-like"/>
    <property type="match status" value="1"/>
</dbReference>
<comment type="similarity">
    <text evidence="1">Belongs to the bacterial ribosomal protein bL28 family.</text>
</comment>
<organism>
    <name type="scientific">Magnetococcus marinus (strain ATCC BAA-1437 / JCM 17883 / MC-1)</name>
    <dbReference type="NCBI Taxonomy" id="156889"/>
    <lineage>
        <taxon>Bacteria</taxon>
        <taxon>Pseudomonadati</taxon>
        <taxon>Pseudomonadota</taxon>
        <taxon>Alphaproteobacteria</taxon>
        <taxon>Magnetococcales</taxon>
        <taxon>Magnetococcaceae</taxon>
        <taxon>Magnetococcus</taxon>
    </lineage>
</organism>
<proteinExistence type="inferred from homology"/>
<feature type="chain" id="PRO_1000007272" description="Large ribosomal subunit protein bL28">
    <location>
        <begin position="1"/>
        <end position="95"/>
    </location>
</feature>
<feature type="region of interest" description="Disordered" evidence="2">
    <location>
        <begin position="1"/>
        <end position="28"/>
    </location>
</feature>
<name>RL28_MAGMM</name>
<accession>A0L5U1</accession>
<reference key="1">
    <citation type="journal article" date="2009" name="Appl. Environ. Microbiol.">
        <title>Complete genome sequence of the chemolithoautotrophic marine magnetotactic coccus strain MC-1.</title>
        <authorList>
            <person name="Schubbe S."/>
            <person name="Williams T.J."/>
            <person name="Xie G."/>
            <person name="Kiss H.E."/>
            <person name="Brettin T.S."/>
            <person name="Martinez D."/>
            <person name="Ross C.A."/>
            <person name="Schuler D."/>
            <person name="Cox B.L."/>
            <person name="Nealson K.H."/>
            <person name="Bazylinski D.A."/>
        </authorList>
    </citation>
    <scope>NUCLEOTIDE SEQUENCE [LARGE SCALE GENOMIC DNA]</scope>
    <source>
        <strain>ATCC BAA-1437 / JCM 17883 / MC-1</strain>
    </source>
</reference>
<evidence type="ECO:0000255" key="1">
    <source>
        <dbReference type="HAMAP-Rule" id="MF_00373"/>
    </source>
</evidence>
<evidence type="ECO:0000256" key="2">
    <source>
        <dbReference type="SAM" id="MobiDB-lite"/>
    </source>
</evidence>
<evidence type="ECO:0000305" key="3"/>